<sequence length="371" mass="43218">MREVNLLNRFTRQFLFLIVLVTQICGVATFVYNSKAQCFRQSGFLRFYSSLVLIFLALFLIVTTSKMFHNLQAVWPYVVGSVIILVVRIHGLLESAEIVELLNQMLRIMRQVNLMARHPNLFRLKHLLLLLLALQNLLRSLNTIVGISNHSAEAYDSFLNSVILLIILAVLLSFLLQITINICLFVVLIATYSELHHCTRRISNDMDKLRLHSVHESGQFMVLVKQLQGITEKLIRLRQNVFHITVRIIRHFRFHWLCAIIYGLLPFFSLTAKDQNGFNFLIISALNIIFQWTIFAILSRESRITRSLCTFHLTNYHKETARTIDELLHQEIWERITVTIYGNTLDTKLLFKLLSISAFCAFVNRLEYLHI</sequence>
<evidence type="ECO:0000250" key="1"/>
<evidence type="ECO:0000255" key="2"/>
<evidence type="ECO:0000269" key="3">
    <source>
    </source>
</evidence>
<evidence type="ECO:0000269" key="4">
    <source>
    </source>
</evidence>
<evidence type="ECO:0000303" key="5">
    <source>
    </source>
</evidence>
<evidence type="ECO:0000305" key="6"/>
<evidence type="ECO:0000312" key="7">
    <source>
        <dbReference type="FlyBase" id="FBgn0041232"/>
    </source>
</evidence>
<comment type="subcellular location">
    <subcellularLocation>
        <location evidence="6">Cell membrane</location>
        <topology evidence="6">Multi-pass membrane protein</topology>
    </subcellularLocation>
</comment>
<comment type="miscellaneous">
    <text evidence="4">Gustatory receptor-like proteins are divergent proteins which do not belong to the canonical gustatory receptor or olfactory receptor families but display some structural similarity (PubMed:36803935). They are predicted to be ligand-gated seven transmembrane domain ion channels (PubMed:36803935).</text>
</comment>
<reference evidence="6" key="1">
    <citation type="journal article" date="2000" name="Science">
        <title>The genome sequence of Drosophila melanogaster.</title>
        <authorList>
            <person name="Adams M.D."/>
            <person name="Celniker S.E."/>
            <person name="Holt R.A."/>
            <person name="Evans C.A."/>
            <person name="Gocayne J.D."/>
            <person name="Amanatides P.G."/>
            <person name="Scherer S.E."/>
            <person name="Li P.W."/>
            <person name="Hoskins R.A."/>
            <person name="Galle R.F."/>
            <person name="George R.A."/>
            <person name="Lewis S.E."/>
            <person name="Richards S."/>
            <person name="Ashburner M."/>
            <person name="Henderson S.N."/>
            <person name="Sutton G.G."/>
            <person name="Wortman J.R."/>
            <person name="Yandell M.D."/>
            <person name="Zhang Q."/>
            <person name="Chen L.X."/>
            <person name="Brandon R.C."/>
            <person name="Rogers Y.-H.C."/>
            <person name="Blazej R.G."/>
            <person name="Champe M."/>
            <person name="Pfeiffer B.D."/>
            <person name="Wan K.H."/>
            <person name="Doyle C."/>
            <person name="Baxter E.G."/>
            <person name="Helt G."/>
            <person name="Nelson C.R."/>
            <person name="Miklos G.L.G."/>
            <person name="Abril J.F."/>
            <person name="Agbayani A."/>
            <person name="An H.-J."/>
            <person name="Andrews-Pfannkoch C."/>
            <person name="Baldwin D."/>
            <person name="Ballew R.M."/>
            <person name="Basu A."/>
            <person name="Baxendale J."/>
            <person name="Bayraktaroglu L."/>
            <person name="Beasley E.M."/>
            <person name="Beeson K.Y."/>
            <person name="Benos P.V."/>
            <person name="Berman B.P."/>
            <person name="Bhandari D."/>
            <person name="Bolshakov S."/>
            <person name="Borkova D."/>
            <person name="Botchan M.R."/>
            <person name="Bouck J."/>
            <person name="Brokstein P."/>
            <person name="Brottier P."/>
            <person name="Burtis K.C."/>
            <person name="Busam D.A."/>
            <person name="Butler H."/>
            <person name="Cadieu E."/>
            <person name="Center A."/>
            <person name="Chandra I."/>
            <person name="Cherry J.M."/>
            <person name="Cawley S."/>
            <person name="Dahlke C."/>
            <person name="Davenport L.B."/>
            <person name="Davies P."/>
            <person name="de Pablos B."/>
            <person name="Delcher A."/>
            <person name="Deng Z."/>
            <person name="Mays A.D."/>
            <person name="Dew I."/>
            <person name="Dietz S.M."/>
            <person name="Dodson K."/>
            <person name="Doup L.E."/>
            <person name="Downes M."/>
            <person name="Dugan-Rocha S."/>
            <person name="Dunkov B.C."/>
            <person name="Dunn P."/>
            <person name="Durbin K.J."/>
            <person name="Evangelista C.C."/>
            <person name="Ferraz C."/>
            <person name="Ferriera S."/>
            <person name="Fleischmann W."/>
            <person name="Fosler C."/>
            <person name="Gabrielian A.E."/>
            <person name="Garg N.S."/>
            <person name="Gelbart W.M."/>
            <person name="Glasser K."/>
            <person name="Glodek A."/>
            <person name="Gong F."/>
            <person name="Gorrell J.H."/>
            <person name="Gu Z."/>
            <person name="Guan P."/>
            <person name="Harris M."/>
            <person name="Harris N.L."/>
            <person name="Harvey D.A."/>
            <person name="Heiman T.J."/>
            <person name="Hernandez J.R."/>
            <person name="Houck J."/>
            <person name="Hostin D."/>
            <person name="Houston K.A."/>
            <person name="Howland T.J."/>
            <person name="Wei M.-H."/>
            <person name="Ibegwam C."/>
            <person name="Jalali M."/>
            <person name="Kalush F."/>
            <person name="Karpen G.H."/>
            <person name="Ke Z."/>
            <person name="Kennison J.A."/>
            <person name="Ketchum K.A."/>
            <person name="Kimmel B.E."/>
            <person name="Kodira C.D."/>
            <person name="Kraft C.L."/>
            <person name="Kravitz S."/>
            <person name="Kulp D."/>
            <person name="Lai Z."/>
            <person name="Lasko P."/>
            <person name="Lei Y."/>
            <person name="Levitsky A.A."/>
            <person name="Li J.H."/>
            <person name="Li Z."/>
            <person name="Liang Y."/>
            <person name="Lin X."/>
            <person name="Liu X."/>
            <person name="Mattei B."/>
            <person name="McIntosh T.C."/>
            <person name="McLeod M.P."/>
            <person name="McPherson D."/>
            <person name="Merkulov G."/>
            <person name="Milshina N.V."/>
            <person name="Mobarry C."/>
            <person name="Morris J."/>
            <person name="Moshrefi A."/>
            <person name="Mount S.M."/>
            <person name="Moy M."/>
            <person name="Murphy B."/>
            <person name="Murphy L."/>
            <person name="Muzny D.M."/>
            <person name="Nelson D.L."/>
            <person name="Nelson D.R."/>
            <person name="Nelson K.A."/>
            <person name="Nixon K."/>
            <person name="Nusskern D.R."/>
            <person name="Pacleb J.M."/>
            <person name="Palazzolo M."/>
            <person name="Pittman G.S."/>
            <person name="Pan S."/>
            <person name="Pollard J."/>
            <person name="Puri V."/>
            <person name="Reese M.G."/>
            <person name="Reinert K."/>
            <person name="Remington K."/>
            <person name="Saunders R.D.C."/>
            <person name="Scheeler F."/>
            <person name="Shen H."/>
            <person name="Shue B.C."/>
            <person name="Siden-Kiamos I."/>
            <person name="Simpson M."/>
            <person name="Skupski M.P."/>
            <person name="Smith T.J."/>
            <person name="Spier E."/>
            <person name="Spradling A.C."/>
            <person name="Stapleton M."/>
            <person name="Strong R."/>
            <person name="Sun E."/>
            <person name="Svirskas R."/>
            <person name="Tector C."/>
            <person name="Turner R."/>
            <person name="Venter E."/>
            <person name="Wang A.H."/>
            <person name="Wang X."/>
            <person name="Wang Z.-Y."/>
            <person name="Wassarman D.A."/>
            <person name="Weinstock G.M."/>
            <person name="Weissenbach J."/>
            <person name="Williams S.M."/>
            <person name="Woodage T."/>
            <person name="Worley K.C."/>
            <person name="Wu D."/>
            <person name="Yang S."/>
            <person name="Yao Q.A."/>
            <person name="Ye J."/>
            <person name="Yeh R.-F."/>
            <person name="Zaveri J.S."/>
            <person name="Zhan M."/>
            <person name="Zhang G."/>
            <person name="Zhao Q."/>
            <person name="Zheng L."/>
            <person name="Zheng X.H."/>
            <person name="Zhong F.N."/>
            <person name="Zhong W."/>
            <person name="Zhou X."/>
            <person name="Zhu S.C."/>
            <person name="Zhu X."/>
            <person name="Smith H.O."/>
            <person name="Gibbs R.A."/>
            <person name="Myers E.W."/>
            <person name="Rubin G.M."/>
            <person name="Venter J.C."/>
        </authorList>
    </citation>
    <scope>NUCLEOTIDE SEQUENCE [LARGE SCALE GENOMIC DNA]</scope>
    <source>
        <strain evidence="3">Berkeley</strain>
    </source>
</reference>
<reference evidence="6" key="2">
    <citation type="journal article" date="2002" name="Genome Biol.">
        <title>Annotation of the Drosophila melanogaster euchromatic genome: a systematic review.</title>
        <authorList>
            <person name="Misra S."/>
            <person name="Crosby M.A."/>
            <person name="Mungall C.J."/>
            <person name="Matthews B.B."/>
            <person name="Campbell K.S."/>
            <person name="Hradecky P."/>
            <person name="Huang Y."/>
            <person name="Kaminker J.S."/>
            <person name="Millburn G.H."/>
            <person name="Prochnik S.E."/>
            <person name="Smith C.D."/>
            <person name="Tupy J.L."/>
            <person name="Whitfield E.J."/>
            <person name="Bayraktaroglu L."/>
            <person name="Berman B.P."/>
            <person name="Bettencourt B.R."/>
            <person name="Celniker S.E."/>
            <person name="de Grey A.D.N.J."/>
            <person name="Drysdale R.A."/>
            <person name="Harris N.L."/>
            <person name="Richter J."/>
            <person name="Russo S."/>
            <person name="Schroeder A.J."/>
            <person name="Shu S.Q."/>
            <person name="Stapleton M."/>
            <person name="Yamada C."/>
            <person name="Ashburner M."/>
            <person name="Gelbart W.M."/>
            <person name="Rubin G.M."/>
            <person name="Lewis S.E."/>
        </authorList>
    </citation>
    <scope>GENOME REANNOTATION</scope>
    <source>
        <strain>Berkeley</strain>
    </source>
</reference>
<reference evidence="6" key="3">
    <citation type="journal article" date="2000" name="Science">
        <title>Candidate taste receptors in Drosophila.</title>
        <authorList>
            <person name="Clyne P.J."/>
            <person name="Warr C.G."/>
            <person name="Carlson J.R."/>
        </authorList>
    </citation>
    <scope>IDENTIFICATION</scope>
</reference>
<reference key="4">
    <citation type="journal article" date="2023" name="Elife">
        <title>Structural screens identify candidate human homologs of insect chemoreceptors and cryptic Drosophila gustatory receptor-like proteins.</title>
        <authorList>
            <person name="Benton R."/>
            <person name="Himmel N.J."/>
        </authorList>
    </citation>
    <scope>IDENTIFICATION AS GUSTATORY RECEPTOR-LIKE PROTEIN</scope>
</reference>
<feature type="chain" id="PRO_0000216534" description="Gustatory receptor-like 65a">
    <location>
        <begin position="1"/>
        <end position="371"/>
    </location>
</feature>
<feature type="topological domain" description="Cytoplasmic" evidence="1">
    <location>
        <begin position="1"/>
        <end position="13"/>
    </location>
</feature>
<feature type="transmembrane region" description="Helical; Name=1" evidence="2">
    <location>
        <begin position="14"/>
        <end position="34"/>
    </location>
</feature>
<feature type="topological domain" description="Extracellular" evidence="1">
    <location>
        <begin position="35"/>
        <end position="42"/>
    </location>
</feature>
<feature type="transmembrane region" description="Helical; Name=2" evidence="2">
    <location>
        <begin position="43"/>
        <end position="63"/>
    </location>
</feature>
<feature type="topological domain" description="Cytoplasmic" evidence="1">
    <location>
        <begin position="64"/>
        <end position="72"/>
    </location>
</feature>
<feature type="transmembrane region" description="Helical; Name=3" evidence="2">
    <location>
        <begin position="73"/>
        <end position="93"/>
    </location>
</feature>
<feature type="topological domain" description="Extracellular" evidence="1">
    <location>
        <begin position="94"/>
        <end position="126"/>
    </location>
</feature>
<feature type="transmembrane region" description="Helical; Name=4" evidence="2">
    <location>
        <begin position="127"/>
        <end position="147"/>
    </location>
</feature>
<feature type="topological domain" description="Cytoplasmic" evidence="1">
    <location>
        <begin position="148"/>
        <end position="161"/>
    </location>
</feature>
<feature type="transmembrane region" description="Helical; Name=5" evidence="2">
    <location>
        <begin position="162"/>
        <end position="182"/>
    </location>
</feature>
<feature type="topological domain" description="Extracellular" evidence="1">
    <location>
        <begin position="183"/>
        <end position="251"/>
    </location>
</feature>
<feature type="transmembrane region" description="Helical; Name=6" evidence="2">
    <location>
        <begin position="252"/>
        <end position="272"/>
    </location>
</feature>
<feature type="topological domain" description="Cytoplasmic" evidence="1">
    <location>
        <begin position="273"/>
        <end position="277"/>
    </location>
</feature>
<feature type="transmembrane region" description="Helical; Name=7" evidence="2">
    <location>
        <begin position="278"/>
        <end position="298"/>
    </location>
</feature>
<feature type="topological domain" description="Extracellular" evidence="1">
    <location>
        <begin position="299"/>
        <end position="371"/>
    </location>
</feature>
<protein>
    <recommendedName>
        <fullName evidence="5">Gustatory receptor-like 65a</fullName>
    </recommendedName>
</protein>
<dbReference type="EMBL" id="AE014296">
    <property type="protein sequence ID" value="AAN12076.3"/>
    <property type="molecule type" value="Genomic_DNA"/>
</dbReference>
<dbReference type="RefSeq" id="NP_729182.3">
    <property type="nucleotide sequence ID" value="NM_168175.3"/>
</dbReference>
<dbReference type="PaxDb" id="7227-FBpp0289303"/>
<dbReference type="EnsemblMetazoa" id="FBtr0300026">
    <property type="protein sequence ID" value="FBpp0289303"/>
    <property type="gene ID" value="FBgn0041232"/>
</dbReference>
<dbReference type="GeneID" id="117342"/>
<dbReference type="KEGG" id="dme:Dmel_CG32395"/>
<dbReference type="AGR" id="FB:FBgn0041232"/>
<dbReference type="CTD" id="117342"/>
<dbReference type="FlyBase" id="FBgn0041232">
    <property type="gene designation" value="Grl65a"/>
</dbReference>
<dbReference type="VEuPathDB" id="VectorBase:FBgn0041232"/>
<dbReference type="HOGENOM" id="CLU_738244_0_0_1"/>
<dbReference type="InParanoid" id="Q8IQ72"/>
<dbReference type="OMA" id="HFRFHWL"/>
<dbReference type="OrthoDB" id="8065495at2759"/>
<dbReference type="PhylomeDB" id="Q8IQ72"/>
<dbReference type="BioGRID-ORCS" id="117342">
    <property type="hits" value="0 hits in 1 CRISPR screen"/>
</dbReference>
<dbReference type="GenomeRNAi" id="117342"/>
<dbReference type="PRO" id="PR:Q8IQ72"/>
<dbReference type="Proteomes" id="UP000000803">
    <property type="component" value="Chromosome 3L"/>
</dbReference>
<dbReference type="GO" id="GO:0016020">
    <property type="term" value="C:membrane"/>
    <property type="evidence" value="ECO:0000255"/>
    <property type="project" value="FlyBase"/>
</dbReference>
<dbReference type="GO" id="GO:0005886">
    <property type="term" value="C:plasma membrane"/>
    <property type="evidence" value="ECO:0007669"/>
    <property type="project" value="UniProtKB-SubCell"/>
</dbReference>
<dbReference type="GO" id="GO:0022834">
    <property type="term" value="F:ligand-gated channel activity"/>
    <property type="evidence" value="ECO:0000255"/>
    <property type="project" value="FlyBase"/>
</dbReference>
<dbReference type="GO" id="GO:0050909">
    <property type="term" value="P:sensory perception of taste"/>
    <property type="evidence" value="ECO:0007669"/>
    <property type="project" value="InterPro"/>
</dbReference>
<dbReference type="GO" id="GO:0055085">
    <property type="term" value="P:transmembrane transport"/>
    <property type="evidence" value="ECO:0000255"/>
    <property type="project" value="FlyBase"/>
</dbReference>
<dbReference type="InterPro" id="IPR013604">
    <property type="entry name" value="7TM_chemorcpt"/>
</dbReference>
<dbReference type="Pfam" id="PF08395">
    <property type="entry name" value="7tm_7"/>
    <property type="match status" value="1"/>
</dbReference>
<gene>
    <name evidence="5 7" type="primary">Grl65a</name>
    <name evidence="7" type="ORF">CG32395</name>
</gene>
<organism>
    <name type="scientific">Drosophila melanogaster</name>
    <name type="common">Fruit fly</name>
    <dbReference type="NCBI Taxonomy" id="7227"/>
    <lineage>
        <taxon>Eukaryota</taxon>
        <taxon>Metazoa</taxon>
        <taxon>Ecdysozoa</taxon>
        <taxon>Arthropoda</taxon>
        <taxon>Hexapoda</taxon>
        <taxon>Insecta</taxon>
        <taxon>Pterygota</taxon>
        <taxon>Neoptera</taxon>
        <taxon>Endopterygota</taxon>
        <taxon>Diptera</taxon>
        <taxon>Brachycera</taxon>
        <taxon>Muscomorpha</taxon>
        <taxon>Ephydroidea</taxon>
        <taxon>Drosophilidae</taxon>
        <taxon>Drosophila</taxon>
        <taxon>Sophophora</taxon>
    </lineage>
</organism>
<accession>Q8IQ72</accession>
<proteinExistence type="predicted"/>
<name>GL65A_DROME</name>
<keyword id="KW-1003">Cell membrane</keyword>
<keyword id="KW-0472">Membrane</keyword>
<keyword id="KW-1185">Reference proteome</keyword>
<keyword id="KW-0812">Transmembrane</keyword>
<keyword id="KW-1133">Transmembrane helix</keyword>